<feature type="chain" id="PRO_0000452622" description="Probable copper-dependent oxygenase clz3">
    <location>
        <begin position="1"/>
        <end position="309"/>
    </location>
</feature>
<feature type="transmembrane region" description="Helical" evidence="2">
    <location>
        <begin position="257"/>
        <end position="277"/>
    </location>
</feature>
<feature type="glycosylation site" description="N-linked (GlcNAc...) asparagine" evidence="3">
    <location>
        <position position="9"/>
    </location>
</feature>
<feature type="glycosylation site" description="N-linked (GlcNAc...) asparagine" evidence="3">
    <location>
        <position position="249"/>
    </location>
</feature>
<protein>
    <recommendedName>
        <fullName evidence="5">Probable copper-dependent oxygenase clz3</fullName>
        <ecNumber evidence="7">1.-.-.-</ecNumber>
    </recommendedName>
    <alternativeName>
        <fullName evidence="5">Squalestatin S1 biosynthesis cluster protein clz3</fullName>
    </alternativeName>
    <alternativeName>
        <fullName evidence="5">Zaragozic acid A biosynthesis cluster protein 3</fullName>
    </alternativeName>
</protein>
<organism>
    <name type="scientific">Cochliobolus lunatus</name>
    <name type="common">Filamentous fungus</name>
    <name type="synonym">Curvularia lunata</name>
    <dbReference type="NCBI Taxonomy" id="5503"/>
    <lineage>
        <taxon>Eukaryota</taxon>
        <taxon>Fungi</taxon>
        <taxon>Dikarya</taxon>
        <taxon>Ascomycota</taxon>
        <taxon>Pezizomycotina</taxon>
        <taxon>Dothideomycetes</taxon>
        <taxon>Pleosporomycetidae</taxon>
        <taxon>Pleosporales</taxon>
        <taxon>Pleosporineae</taxon>
        <taxon>Pleosporaceae</taxon>
        <taxon>Curvularia</taxon>
    </lineage>
</organism>
<comment type="function">
    <text evidence="1 4 7">Probable copper-dependent oxygenase; part of the gene cluster that mediates the biosynthesis of squalestatin S1 (SQS1, also known as zaragozic acid A), a heavily oxidized fungal polyketide that offers potent cholesterol lowering activity by targeting squalene synthase (SS) (PubMed:28605916). SQS1 is composed of a 2,8-dioxobicyclic[3.2.1]octane-3,4,5-tricarboxyclic acid core that is connected to two lipophilic polyketide arms (PubMed:28605916). These initial steps feature the priming of an unusual benzoic acid starter unit onto the highly reducing polyketide synthase clz14, followed by oxaloacetate extension and product release to generate a tricarboxylic acid containing product (PubMed:28605916). The phenylalanine ammonia lyase (PAL) clz10 and the acyl-CoA ligase clz12 are involved in transforming phenylalanine into benzoyl-CoA (PubMed:28605916). The citrate synthase-like protein clz17 is involved in connecting the C-alpha-carbons of the hexaketide chain and oxaloacetate to afford the tricarboxylic acid unit (PubMed:28605916). The potential hydrolytic enzymes, clz11 and clz13, are in close proximity to pks2 and may participate in product release (PubMed:28605916). On the other side, the tetraketide arm is synthesized by a the squalestatin tetraketide synthase clz2 and enzymatically esterified to the core in the last biosynthetic step, by the acetyltransferase clz6 (By similarity). The biosynthesis of the tetraketide must involve 3 rounds of chain extension (By similarity). After the first and second rounds methyl-transfer occurs, and in all rounds of extension the ketoreductase and dehydratase are active (By similarity). The enoyl reductase and C-MeT of clz2 are not active in the final round of extension (By similarity). The acetyltransferase clz6 appears to have a broad substrate selectivity for its acyl CoA substrate, allowing the in vitro synthesis of novel squalestatins (By similarity). The biosynthesis of SQS1 requires several oxidative steps likely performed by oxidoreductases clz3, clz15 and clz16 (Probable). Finally, in support of the identification of the cluster as being responsible for SQS1 production, the cluster contains a gene encoding a putative squalene synthase (SS) clz20, suggesting a likely mechanism for self-resistance (Probable).</text>
</comment>
<comment type="pathway">
    <text evidence="7">Secondary metabolite biosynthesis.</text>
</comment>
<comment type="subcellular location">
    <subcellularLocation>
        <location evidence="2">Membrane</location>
        <topology evidence="2">Single-pass membrane protein</topology>
    </subcellularLocation>
</comment>
<comment type="similarity">
    <text evidence="6">Belongs to the clz3 oxygenase family.</text>
</comment>
<proteinExistence type="inferred from homology"/>
<evidence type="ECO:0000250" key="1">
    <source>
        <dbReference type="UniProtKB" id="A0A3G1DJE8"/>
    </source>
</evidence>
<evidence type="ECO:0000255" key="2"/>
<evidence type="ECO:0000255" key="3">
    <source>
        <dbReference type="PROSITE-ProRule" id="PRU00498"/>
    </source>
</evidence>
<evidence type="ECO:0000269" key="4">
    <source>
    </source>
</evidence>
<evidence type="ECO:0000303" key="5">
    <source>
    </source>
</evidence>
<evidence type="ECO:0000305" key="6"/>
<evidence type="ECO:0000305" key="7">
    <source>
    </source>
</evidence>
<sequence length="309" mass="34134">MSANLEYPNGTTADAENGMWLHHILFYNKANRDDICGEKKPGQRFFGSGNDRTPLDLTDGGKNKLGYHIGHNDQFFISVELMNMHFSSQVVVLTAHWKFVEEPYSKYELGTPYWFDVASCGRSDVPATNNAIFDFISPPVRLDFHGRMAYLSNHVHDGAFLHEVKKNGKTICSVNPQYSSADGADGIVHLSHVPPCSNAGPVAPGDEVSLTASYDTTKYKPMINEDGTLEPVMGVTLAYIVKGTAPVENDSGGRLYFAVPLAAIAFIALIISGGYVIYSAKQQKAWPKWLSRRQKYQSVGTEVESFITR</sequence>
<name>CLZ3_COCLU</name>
<accession>A0A345BJP1</accession>
<gene>
    <name evidence="5" type="primary">clz3</name>
</gene>
<keyword id="KW-0186">Copper</keyword>
<keyword id="KW-0325">Glycoprotein</keyword>
<keyword id="KW-0472">Membrane</keyword>
<keyword id="KW-0560">Oxidoreductase</keyword>
<keyword id="KW-0812">Transmembrane</keyword>
<keyword id="KW-1133">Transmembrane helix</keyword>
<dbReference type="EC" id="1.-.-.-" evidence="7"/>
<dbReference type="EMBL" id="MF806533">
    <property type="protein sequence ID" value="AXF50654.1"/>
    <property type="molecule type" value="Genomic_DNA"/>
</dbReference>
<dbReference type="GlyCosmos" id="A0A345BJP1">
    <property type="glycosylation" value="2 sites, No reported glycans"/>
</dbReference>
<dbReference type="GO" id="GO:0016020">
    <property type="term" value="C:membrane"/>
    <property type="evidence" value="ECO:0007669"/>
    <property type="project" value="UniProtKB-SubCell"/>
</dbReference>
<dbReference type="GO" id="GO:0016491">
    <property type="term" value="F:oxidoreductase activity"/>
    <property type="evidence" value="ECO:0007669"/>
    <property type="project" value="UniProtKB-KW"/>
</dbReference>
<reference key="1">
    <citation type="journal article" date="2017" name="Org. Lett.">
        <title>Identification and heterologous production of a benzoyl-primed tricarboxylic acid polyketide intermediate from the zaragozic acid A biosynthetic pathway.</title>
        <authorList>
            <person name="Liu N."/>
            <person name="Hung Y.S."/>
            <person name="Gao S.S."/>
            <person name="Hang L."/>
            <person name="Zou Y."/>
            <person name="Chooi Y.H."/>
            <person name="Tang Y."/>
        </authorList>
    </citation>
    <scope>NUCLEOTIDE SEQUENCE [GENOMIC DNA]</scope>
    <scope>FUNCTION</scope>
    <scope>PATHWAY</scope>
    <source>
        <strain>ATCC 74067</strain>
    </source>
</reference>